<feature type="chain" id="PRO_1000149794" description="Ribosome maturation factor RimP">
    <location>
        <begin position="1"/>
        <end position="159"/>
    </location>
</feature>
<protein>
    <recommendedName>
        <fullName evidence="1">Ribosome maturation factor RimP</fullName>
    </recommendedName>
</protein>
<sequence length="159" mass="17780">MAKVDVVSRVTELAEQVLSSLGMELVELEYKHEGRELVLRLFIDKEGGVTLDDCESVSRDLSQILEVEDIITGHYRFEVSSPGLDRPLKKGSDYEKYAGRLVKIRTFEALADDAGNKRKTFLGELKGLKEGQVHIALKEGQSAVIPLDKIAKANLEFEF</sequence>
<evidence type="ECO:0000255" key="1">
    <source>
        <dbReference type="HAMAP-Rule" id="MF_01077"/>
    </source>
</evidence>
<reference key="1">
    <citation type="submission" date="2009-01" db="EMBL/GenBank/DDBJ databases">
        <title>Complete sequence of Geobacter sp. FRC-32.</title>
        <authorList>
            <consortium name="US DOE Joint Genome Institute"/>
            <person name="Lucas S."/>
            <person name="Copeland A."/>
            <person name="Lapidus A."/>
            <person name="Glavina del Rio T."/>
            <person name="Dalin E."/>
            <person name="Tice H."/>
            <person name="Bruce D."/>
            <person name="Goodwin L."/>
            <person name="Pitluck S."/>
            <person name="Saunders E."/>
            <person name="Brettin T."/>
            <person name="Detter J.C."/>
            <person name="Han C."/>
            <person name="Larimer F."/>
            <person name="Land M."/>
            <person name="Hauser L."/>
            <person name="Kyrpides N."/>
            <person name="Ovchinnikova G."/>
            <person name="Kostka J."/>
            <person name="Richardson P."/>
        </authorList>
    </citation>
    <scope>NUCLEOTIDE SEQUENCE [LARGE SCALE GENOMIC DNA]</scope>
    <source>
        <strain>DSM 22248 / JCM 15807 / FRC-32</strain>
    </source>
</reference>
<name>RIMP_GEODF</name>
<gene>
    <name evidence="1" type="primary">rimP</name>
    <name type="ordered locus">Geob_2689</name>
</gene>
<accession>B9M1F7</accession>
<proteinExistence type="inferred from homology"/>
<keyword id="KW-0963">Cytoplasm</keyword>
<keyword id="KW-1185">Reference proteome</keyword>
<keyword id="KW-0690">Ribosome biogenesis</keyword>
<comment type="function">
    <text evidence="1">Required for maturation of 30S ribosomal subunits.</text>
</comment>
<comment type="subcellular location">
    <subcellularLocation>
        <location evidence="1">Cytoplasm</location>
    </subcellularLocation>
</comment>
<comment type="similarity">
    <text evidence="1">Belongs to the RimP family.</text>
</comment>
<organism>
    <name type="scientific">Geotalea daltonii (strain DSM 22248 / JCM 15807 / FRC-32)</name>
    <name type="common">Geobacter daltonii</name>
    <dbReference type="NCBI Taxonomy" id="316067"/>
    <lineage>
        <taxon>Bacteria</taxon>
        <taxon>Pseudomonadati</taxon>
        <taxon>Thermodesulfobacteriota</taxon>
        <taxon>Desulfuromonadia</taxon>
        <taxon>Geobacterales</taxon>
        <taxon>Geobacteraceae</taxon>
        <taxon>Geotalea</taxon>
    </lineage>
</organism>
<dbReference type="EMBL" id="CP001390">
    <property type="protein sequence ID" value="ACM21039.1"/>
    <property type="molecule type" value="Genomic_DNA"/>
</dbReference>
<dbReference type="RefSeq" id="WP_012647767.1">
    <property type="nucleotide sequence ID" value="NC_011979.1"/>
</dbReference>
<dbReference type="SMR" id="B9M1F7"/>
<dbReference type="STRING" id="316067.Geob_2689"/>
<dbReference type="KEGG" id="geo:Geob_2689"/>
<dbReference type="eggNOG" id="COG0779">
    <property type="taxonomic scope" value="Bacteria"/>
</dbReference>
<dbReference type="HOGENOM" id="CLU_070525_2_2_7"/>
<dbReference type="OrthoDB" id="9805006at2"/>
<dbReference type="Proteomes" id="UP000007721">
    <property type="component" value="Chromosome"/>
</dbReference>
<dbReference type="GO" id="GO:0005829">
    <property type="term" value="C:cytosol"/>
    <property type="evidence" value="ECO:0007669"/>
    <property type="project" value="TreeGrafter"/>
</dbReference>
<dbReference type="GO" id="GO:0000028">
    <property type="term" value="P:ribosomal small subunit assembly"/>
    <property type="evidence" value="ECO:0007669"/>
    <property type="project" value="TreeGrafter"/>
</dbReference>
<dbReference type="GO" id="GO:0006412">
    <property type="term" value="P:translation"/>
    <property type="evidence" value="ECO:0007669"/>
    <property type="project" value="TreeGrafter"/>
</dbReference>
<dbReference type="CDD" id="cd01734">
    <property type="entry name" value="YlxS_C"/>
    <property type="match status" value="1"/>
</dbReference>
<dbReference type="FunFam" id="3.30.300.70:FF:000001">
    <property type="entry name" value="Ribosome maturation factor RimP"/>
    <property type="match status" value="1"/>
</dbReference>
<dbReference type="Gene3D" id="2.30.30.180">
    <property type="entry name" value="Ribosome maturation factor RimP, C-terminal domain"/>
    <property type="match status" value="1"/>
</dbReference>
<dbReference type="Gene3D" id="3.30.300.70">
    <property type="entry name" value="RimP-like superfamily, N-terminal"/>
    <property type="match status" value="1"/>
</dbReference>
<dbReference type="HAMAP" id="MF_01077">
    <property type="entry name" value="RimP"/>
    <property type="match status" value="1"/>
</dbReference>
<dbReference type="InterPro" id="IPR003728">
    <property type="entry name" value="Ribosome_maturation_RimP"/>
</dbReference>
<dbReference type="InterPro" id="IPR028998">
    <property type="entry name" value="RimP_C"/>
</dbReference>
<dbReference type="InterPro" id="IPR036847">
    <property type="entry name" value="RimP_C_sf"/>
</dbReference>
<dbReference type="InterPro" id="IPR028989">
    <property type="entry name" value="RimP_N"/>
</dbReference>
<dbReference type="InterPro" id="IPR035956">
    <property type="entry name" value="RimP_N_sf"/>
</dbReference>
<dbReference type="NCBIfam" id="NF011241">
    <property type="entry name" value="PRK14647.1"/>
    <property type="match status" value="1"/>
</dbReference>
<dbReference type="PANTHER" id="PTHR33867">
    <property type="entry name" value="RIBOSOME MATURATION FACTOR RIMP"/>
    <property type="match status" value="1"/>
</dbReference>
<dbReference type="PANTHER" id="PTHR33867:SF1">
    <property type="entry name" value="RIBOSOME MATURATION FACTOR RIMP"/>
    <property type="match status" value="1"/>
</dbReference>
<dbReference type="Pfam" id="PF17384">
    <property type="entry name" value="DUF150_C"/>
    <property type="match status" value="1"/>
</dbReference>
<dbReference type="Pfam" id="PF02576">
    <property type="entry name" value="RimP_N"/>
    <property type="match status" value="1"/>
</dbReference>
<dbReference type="SUPFAM" id="SSF74942">
    <property type="entry name" value="YhbC-like, C-terminal domain"/>
    <property type="match status" value="1"/>
</dbReference>
<dbReference type="SUPFAM" id="SSF75420">
    <property type="entry name" value="YhbC-like, N-terminal domain"/>
    <property type="match status" value="1"/>
</dbReference>